<gene>
    <name evidence="1" type="primary">tig</name>
    <name type="ordered locus">Dshi_2190</name>
</gene>
<feature type="chain" id="PRO_1000079038" description="Trigger factor">
    <location>
        <begin position="1"/>
        <end position="442"/>
    </location>
</feature>
<feature type="domain" description="PPIase FKBP-type" evidence="1">
    <location>
        <begin position="163"/>
        <end position="248"/>
    </location>
</feature>
<comment type="function">
    <text evidence="1">Involved in protein export. Acts as a chaperone by maintaining the newly synthesized protein in an open conformation. Functions as a peptidyl-prolyl cis-trans isomerase.</text>
</comment>
<comment type="catalytic activity">
    <reaction evidence="1">
        <text>[protein]-peptidylproline (omega=180) = [protein]-peptidylproline (omega=0)</text>
        <dbReference type="Rhea" id="RHEA:16237"/>
        <dbReference type="Rhea" id="RHEA-COMP:10747"/>
        <dbReference type="Rhea" id="RHEA-COMP:10748"/>
        <dbReference type="ChEBI" id="CHEBI:83833"/>
        <dbReference type="ChEBI" id="CHEBI:83834"/>
        <dbReference type="EC" id="5.2.1.8"/>
    </reaction>
</comment>
<comment type="subcellular location">
    <subcellularLocation>
        <location>Cytoplasm</location>
    </subcellularLocation>
    <text evidence="1">About half TF is bound to the ribosome near the polypeptide exit tunnel while the other half is free in the cytoplasm.</text>
</comment>
<comment type="domain">
    <text evidence="1">Consists of 3 domains; the N-terminus binds the ribosome, the middle domain has PPIase activity, while the C-terminus has intrinsic chaperone activity on its own.</text>
</comment>
<comment type="similarity">
    <text evidence="1">Belongs to the FKBP-type PPIase family. Tig subfamily.</text>
</comment>
<accession>A8LQQ9</accession>
<evidence type="ECO:0000255" key="1">
    <source>
        <dbReference type="HAMAP-Rule" id="MF_00303"/>
    </source>
</evidence>
<name>TIG_DINSH</name>
<keyword id="KW-0131">Cell cycle</keyword>
<keyword id="KW-0132">Cell division</keyword>
<keyword id="KW-0143">Chaperone</keyword>
<keyword id="KW-0963">Cytoplasm</keyword>
<keyword id="KW-0413">Isomerase</keyword>
<keyword id="KW-1185">Reference proteome</keyword>
<keyword id="KW-0697">Rotamase</keyword>
<protein>
    <recommendedName>
        <fullName evidence="1">Trigger factor</fullName>
        <shortName evidence="1">TF</shortName>
        <ecNumber evidence="1">5.2.1.8</ecNumber>
    </recommendedName>
    <alternativeName>
        <fullName evidence="1">PPIase</fullName>
    </alternativeName>
</protein>
<organism>
    <name type="scientific">Dinoroseobacter shibae (strain DSM 16493 / NCIMB 14021 / DFL 12)</name>
    <dbReference type="NCBI Taxonomy" id="398580"/>
    <lineage>
        <taxon>Bacteria</taxon>
        <taxon>Pseudomonadati</taxon>
        <taxon>Pseudomonadota</taxon>
        <taxon>Alphaproteobacteria</taxon>
        <taxon>Rhodobacterales</taxon>
        <taxon>Roseobacteraceae</taxon>
        <taxon>Dinoroseobacter</taxon>
    </lineage>
</organism>
<dbReference type="EC" id="5.2.1.8" evidence="1"/>
<dbReference type="EMBL" id="CP000830">
    <property type="protein sequence ID" value="ABV93926.1"/>
    <property type="molecule type" value="Genomic_DNA"/>
</dbReference>
<dbReference type="RefSeq" id="WP_012178857.1">
    <property type="nucleotide sequence ID" value="NC_009952.1"/>
</dbReference>
<dbReference type="SMR" id="A8LQQ9"/>
<dbReference type="STRING" id="398580.Dshi_2190"/>
<dbReference type="KEGG" id="dsh:Dshi_2190"/>
<dbReference type="eggNOG" id="COG0544">
    <property type="taxonomic scope" value="Bacteria"/>
</dbReference>
<dbReference type="HOGENOM" id="CLU_033058_2_2_5"/>
<dbReference type="OrthoDB" id="9767721at2"/>
<dbReference type="Proteomes" id="UP000006833">
    <property type="component" value="Chromosome"/>
</dbReference>
<dbReference type="GO" id="GO:0005737">
    <property type="term" value="C:cytoplasm"/>
    <property type="evidence" value="ECO:0007669"/>
    <property type="project" value="UniProtKB-SubCell"/>
</dbReference>
<dbReference type="GO" id="GO:0003755">
    <property type="term" value="F:peptidyl-prolyl cis-trans isomerase activity"/>
    <property type="evidence" value="ECO:0007669"/>
    <property type="project" value="UniProtKB-UniRule"/>
</dbReference>
<dbReference type="GO" id="GO:0051301">
    <property type="term" value="P:cell division"/>
    <property type="evidence" value="ECO:0007669"/>
    <property type="project" value="UniProtKB-KW"/>
</dbReference>
<dbReference type="GO" id="GO:0006457">
    <property type="term" value="P:protein folding"/>
    <property type="evidence" value="ECO:0007669"/>
    <property type="project" value="UniProtKB-UniRule"/>
</dbReference>
<dbReference type="GO" id="GO:0015031">
    <property type="term" value="P:protein transport"/>
    <property type="evidence" value="ECO:0007669"/>
    <property type="project" value="UniProtKB-UniRule"/>
</dbReference>
<dbReference type="FunFam" id="3.10.50.40:FF:000001">
    <property type="entry name" value="Trigger factor"/>
    <property type="match status" value="1"/>
</dbReference>
<dbReference type="Gene3D" id="3.10.50.40">
    <property type="match status" value="1"/>
</dbReference>
<dbReference type="Gene3D" id="3.30.70.1050">
    <property type="entry name" value="Trigger factor ribosome-binding domain"/>
    <property type="match status" value="1"/>
</dbReference>
<dbReference type="Gene3D" id="1.10.3120.10">
    <property type="entry name" value="Trigger factor, C-terminal domain"/>
    <property type="match status" value="1"/>
</dbReference>
<dbReference type="HAMAP" id="MF_00303">
    <property type="entry name" value="Trigger_factor_Tig"/>
    <property type="match status" value="1"/>
</dbReference>
<dbReference type="InterPro" id="IPR046357">
    <property type="entry name" value="PPIase_dom_sf"/>
</dbReference>
<dbReference type="InterPro" id="IPR001179">
    <property type="entry name" value="PPIase_FKBP_dom"/>
</dbReference>
<dbReference type="InterPro" id="IPR005215">
    <property type="entry name" value="Trig_fac"/>
</dbReference>
<dbReference type="InterPro" id="IPR008880">
    <property type="entry name" value="Trigger_fac_C"/>
</dbReference>
<dbReference type="InterPro" id="IPR037041">
    <property type="entry name" value="Trigger_fac_C_sf"/>
</dbReference>
<dbReference type="InterPro" id="IPR008881">
    <property type="entry name" value="Trigger_fac_ribosome-bd_bac"/>
</dbReference>
<dbReference type="InterPro" id="IPR036611">
    <property type="entry name" value="Trigger_fac_ribosome-bd_sf"/>
</dbReference>
<dbReference type="InterPro" id="IPR027304">
    <property type="entry name" value="Trigger_fact/SurA_dom_sf"/>
</dbReference>
<dbReference type="NCBIfam" id="TIGR00115">
    <property type="entry name" value="tig"/>
    <property type="match status" value="1"/>
</dbReference>
<dbReference type="Pfam" id="PF00254">
    <property type="entry name" value="FKBP_C"/>
    <property type="match status" value="1"/>
</dbReference>
<dbReference type="Pfam" id="PF05698">
    <property type="entry name" value="Trigger_C"/>
    <property type="match status" value="1"/>
</dbReference>
<dbReference type="Pfam" id="PF05697">
    <property type="entry name" value="Trigger_N"/>
    <property type="match status" value="1"/>
</dbReference>
<dbReference type="PIRSF" id="PIRSF003095">
    <property type="entry name" value="Trigger_factor"/>
    <property type="match status" value="1"/>
</dbReference>
<dbReference type="SUPFAM" id="SSF54534">
    <property type="entry name" value="FKBP-like"/>
    <property type="match status" value="1"/>
</dbReference>
<dbReference type="SUPFAM" id="SSF109998">
    <property type="entry name" value="Triger factor/SurA peptide-binding domain-like"/>
    <property type="match status" value="1"/>
</dbReference>
<dbReference type="SUPFAM" id="SSF102735">
    <property type="entry name" value="Trigger factor ribosome-binding domain"/>
    <property type="match status" value="1"/>
</dbReference>
<dbReference type="PROSITE" id="PS50059">
    <property type="entry name" value="FKBP_PPIASE"/>
    <property type="match status" value="1"/>
</dbReference>
<reference key="1">
    <citation type="journal article" date="2010" name="ISME J.">
        <title>The complete genome sequence of the algal symbiont Dinoroseobacter shibae: a hitchhiker's guide to life in the sea.</title>
        <authorList>
            <person name="Wagner-Dobler I."/>
            <person name="Ballhausen B."/>
            <person name="Berger M."/>
            <person name="Brinkhoff T."/>
            <person name="Buchholz I."/>
            <person name="Bunk B."/>
            <person name="Cypionka H."/>
            <person name="Daniel R."/>
            <person name="Drepper T."/>
            <person name="Gerdts G."/>
            <person name="Hahnke S."/>
            <person name="Han C."/>
            <person name="Jahn D."/>
            <person name="Kalhoefer D."/>
            <person name="Kiss H."/>
            <person name="Klenk H.P."/>
            <person name="Kyrpides N."/>
            <person name="Liebl W."/>
            <person name="Liesegang H."/>
            <person name="Meincke L."/>
            <person name="Pati A."/>
            <person name="Petersen J."/>
            <person name="Piekarski T."/>
            <person name="Pommerenke C."/>
            <person name="Pradella S."/>
            <person name="Pukall R."/>
            <person name="Rabus R."/>
            <person name="Stackebrandt E."/>
            <person name="Thole S."/>
            <person name="Thompson L."/>
            <person name="Tielen P."/>
            <person name="Tomasch J."/>
            <person name="von Jan M."/>
            <person name="Wanphrut N."/>
            <person name="Wichels A."/>
            <person name="Zech H."/>
            <person name="Simon M."/>
        </authorList>
    </citation>
    <scope>NUCLEOTIDE SEQUENCE [LARGE SCALE GENOMIC DNA]</scope>
    <source>
        <strain>DSM 16493 / NCIMB 14021 / DFL 12</strain>
    </source>
</reference>
<sequence>MNVTETLNEGLKRGYSITVTAAELDAKVNEKLSEAQPEIEMKGFRKGKVPMALLKKQFGQKLLGEAMQETIDGAMAKHFEDSGDRPALQPEIKMTNEDWKEGDDIEVAMSYEALPEVPDTDFSTVTLEKLVVKADEEAVNEALQNLAENAKSFETKEGAAEDGDQVVIDFLGKVDGEAFEGGAAEDYPLVLGSNSFIPGFEEQLIGTSAGEEKNVDVSFPEQYQAEHLAGKAAVFECKIKEVKAPKAAEIDDEMAKQFGAEDLETLKGQISERLEAEYAGAARAVMKRKLLDELDTLVKFELPPSLVATEAGQIAHQLWHEENPEVEGHDHPEIEPTEEHNKLAERRVRLGLLLAELGQKNEIQVTDAEMTQAIMAQARQYPGQERQFFEFIQQNQQMQQQLRAPIFEDKVVDYIFELATVTEKEISKDDLQKAVEALDDEV</sequence>
<proteinExistence type="inferred from homology"/>